<feature type="chain" id="PRO_0000361783" description="Protein pelota homolog">
    <location>
        <begin position="1"/>
        <end position="355"/>
    </location>
</feature>
<name>PELO_HALMA</name>
<dbReference type="EC" id="3.1.-.-" evidence="1"/>
<dbReference type="EMBL" id="AY596297">
    <property type="protein sequence ID" value="AAV45936.1"/>
    <property type="molecule type" value="Genomic_DNA"/>
</dbReference>
<dbReference type="RefSeq" id="WP_007190325.1">
    <property type="nucleotide sequence ID" value="NZ_CP039138.1"/>
</dbReference>
<dbReference type="SMR" id="Q5V3G6"/>
<dbReference type="STRING" id="272569.rrnAC0965"/>
<dbReference type="PaxDb" id="272569-rrnAC0965"/>
<dbReference type="EnsemblBacteria" id="AAV45936">
    <property type="protein sequence ID" value="AAV45936"/>
    <property type="gene ID" value="rrnAC0965"/>
</dbReference>
<dbReference type="KEGG" id="hma:rrnAC0965"/>
<dbReference type="PATRIC" id="fig|272569.17.peg.1697"/>
<dbReference type="eggNOG" id="arCOG01741">
    <property type="taxonomic scope" value="Archaea"/>
</dbReference>
<dbReference type="HOGENOM" id="CLU_023334_0_0_2"/>
<dbReference type="Proteomes" id="UP000001169">
    <property type="component" value="Chromosome I"/>
</dbReference>
<dbReference type="GO" id="GO:0005737">
    <property type="term" value="C:cytoplasm"/>
    <property type="evidence" value="ECO:0007669"/>
    <property type="project" value="UniProtKB-SubCell"/>
</dbReference>
<dbReference type="GO" id="GO:0004519">
    <property type="term" value="F:endonuclease activity"/>
    <property type="evidence" value="ECO:0007669"/>
    <property type="project" value="UniProtKB-UniRule"/>
</dbReference>
<dbReference type="GO" id="GO:0046872">
    <property type="term" value="F:metal ion binding"/>
    <property type="evidence" value="ECO:0007669"/>
    <property type="project" value="UniProtKB-UniRule"/>
</dbReference>
<dbReference type="GO" id="GO:0070651">
    <property type="term" value="P:nonfunctional rRNA decay"/>
    <property type="evidence" value="ECO:0007669"/>
    <property type="project" value="TreeGrafter"/>
</dbReference>
<dbReference type="GO" id="GO:0070966">
    <property type="term" value="P:nuclear-transcribed mRNA catabolic process, no-go decay"/>
    <property type="evidence" value="ECO:0007669"/>
    <property type="project" value="InterPro"/>
</dbReference>
<dbReference type="GO" id="GO:0070481">
    <property type="term" value="P:nuclear-transcribed mRNA catabolic process, non-stop decay"/>
    <property type="evidence" value="ECO:0007669"/>
    <property type="project" value="InterPro"/>
</dbReference>
<dbReference type="GO" id="GO:0032790">
    <property type="term" value="P:ribosome disassembly"/>
    <property type="evidence" value="ECO:0007669"/>
    <property type="project" value="TreeGrafter"/>
</dbReference>
<dbReference type="GO" id="GO:0071025">
    <property type="term" value="P:RNA surveillance"/>
    <property type="evidence" value="ECO:0007669"/>
    <property type="project" value="InterPro"/>
</dbReference>
<dbReference type="FunFam" id="2.30.30.870:FF:000002">
    <property type="entry name" value="Protein pelota homolog"/>
    <property type="match status" value="1"/>
</dbReference>
<dbReference type="Gene3D" id="3.30.1330.30">
    <property type="match status" value="1"/>
</dbReference>
<dbReference type="Gene3D" id="3.30.420.60">
    <property type="entry name" value="eRF1 domain 2"/>
    <property type="match status" value="1"/>
</dbReference>
<dbReference type="Gene3D" id="2.30.30.870">
    <property type="entry name" value="Pelota, domain A"/>
    <property type="match status" value="1"/>
</dbReference>
<dbReference type="HAMAP" id="MF_01853">
    <property type="entry name" value="PelO"/>
    <property type="match status" value="1"/>
</dbReference>
<dbReference type="InterPro" id="IPR042226">
    <property type="entry name" value="eFR1_2_sf"/>
</dbReference>
<dbReference type="InterPro" id="IPR005140">
    <property type="entry name" value="eRF1_1_Pelota"/>
</dbReference>
<dbReference type="InterPro" id="IPR005141">
    <property type="entry name" value="eRF1_2"/>
</dbReference>
<dbReference type="InterPro" id="IPR005142">
    <property type="entry name" value="eRF1_3"/>
</dbReference>
<dbReference type="InterPro" id="IPR038069">
    <property type="entry name" value="Pelota/DOM34_N"/>
</dbReference>
<dbReference type="InterPro" id="IPR023521">
    <property type="entry name" value="Pelota_arc"/>
</dbReference>
<dbReference type="InterPro" id="IPR029064">
    <property type="entry name" value="Ribosomal_eL30-like_sf"/>
</dbReference>
<dbReference type="InterPro" id="IPR004405">
    <property type="entry name" value="Transl-rel_pelota"/>
</dbReference>
<dbReference type="NCBIfam" id="TIGR00111">
    <property type="entry name" value="pelota"/>
    <property type="match status" value="1"/>
</dbReference>
<dbReference type="PANTHER" id="PTHR10853">
    <property type="entry name" value="PELOTA"/>
    <property type="match status" value="1"/>
</dbReference>
<dbReference type="PANTHER" id="PTHR10853:SF0">
    <property type="entry name" value="PROTEIN PELOTA HOMOLOG"/>
    <property type="match status" value="1"/>
</dbReference>
<dbReference type="Pfam" id="PF03463">
    <property type="entry name" value="eRF1_1"/>
    <property type="match status" value="1"/>
</dbReference>
<dbReference type="Pfam" id="PF03464">
    <property type="entry name" value="eRF1_2"/>
    <property type="match status" value="1"/>
</dbReference>
<dbReference type="Pfam" id="PF03465">
    <property type="entry name" value="eRF1_3"/>
    <property type="match status" value="1"/>
</dbReference>
<dbReference type="SMART" id="SM01194">
    <property type="entry name" value="eRF1_1"/>
    <property type="match status" value="1"/>
</dbReference>
<dbReference type="SUPFAM" id="SSF159065">
    <property type="entry name" value="Dom34/Pelota N-terminal domain-like"/>
    <property type="match status" value="1"/>
</dbReference>
<dbReference type="SUPFAM" id="SSF55315">
    <property type="entry name" value="L30e-like"/>
    <property type="match status" value="1"/>
</dbReference>
<dbReference type="SUPFAM" id="SSF53137">
    <property type="entry name" value="Translational machinery components"/>
    <property type="match status" value="1"/>
</dbReference>
<organism>
    <name type="scientific">Haloarcula marismortui (strain ATCC 43049 / DSM 3752 / JCM 8966 / VKM B-1809)</name>
    <name type="common">Halobacterium marismortui</name>
    <dbReference type="NCBI Taxonomy" id="272569"/>
    <lineage>
        <taxon>Archaea</taxon>
        <taxon>Methanobacteriati</taxon>
        <taxon>Methanobacteriota</taxon>
        <taxon>Stenosarchaea group</taxon>
        <taxon>Halobacteria</taxon>
        <taxon>Halobacteriales</taxon>
        <taxon>Haloarculaceae</taxon>
        <taxon>Haloarcula</taxon>
    </lineage>
</organism>
<gene>
    <name evidence="1" type="primary">pelA</name>
    <name type="ordered locus">rrnAC0965</name>
</gene>
<sequence>MQIQSQETTAEGAERIEVVPETLDDLWHLSYVIEPGDLVSGDTTRRIQRNDDNLRDKGGEREPMWIQIEVTDVEFAKFANRLRVGGEIVDCSREDQLGFHHTLNVEEHTELTVEKHLKPDQADRLEEAVEATENPDVAIATVEEGEAHVHTVAQYGTEERATITSTTGKGEYARPRKELFDELASVLKRQDVDAYILAGPGFTKQDALDHFQDEIPDIAEQITVVDTSAVGDRGVHEVLKRGAVEDVQQQTRIAEEADYIDELMARIGSGSEVAYGPEEVAKAADYGAIETLLVLDERLRLERAGEGDWDIDVDQIIETTEQKGGDVTVFSAEFAPGQQLSNLGGVAALLRYRLD</sequence>
<protein>
    <recommendedName>
        <fullName evidence="1">Protein pelota homolog</fullName>
        <ecNumber evidence="1">3.1.-.-</ecNumber>
    </recommendedName>
</protein>
<evidence type="ECO:0000255" key="1">
    <source>
        <dbReference type="HAMAP-Rule" id="MF_01853"/>
    </source>
</evidence>
<comment type="function">
    <text evidence="1">May function in recognizing stalled ribosomes, interact with stem-loop structures in stalled mRNA molecules, and effect endonucleolytic cleavage of the mRNA. May play a role in the release non-functional ribosomes and degradation of damaged mRNAs. Has endoribonuclease activity.</text>
</comment>
<comment type="cofactor">
    <cofactor evidence="1">
        <name>a divalent metal cation</name>
        <dbReference type="ChEBI" id="CHEBI:60240"/>
    </cofactor>
</comment>
<comment type="subunit">
    <text evidence="1">Monomer.</text>
</comment>
<comment type="subcellular location">
    <subcellularLocation>
        <location evidence="1">Cytoplasm</location>
    </subcellularLocation>
</comment>
<comment type="domain">
    <text evidence="1">The N-terminal domain has the RNA-binding Sm fold. It harbors the endoribonuclease activity.</text>
</comment>
<comment type="similarity">
    <text evidence="1">Belongs to the eukaryotic release factor 1 family. Pelota subfamily.</text>
</comment>
<reference key="1">
    <citation type="journal article" date="2004" name="Genome Res.">
        <title>Genome sequence of Haloarcula marismortui: a halophilic archaeon from the Dead Sea.</title>
        <authorList>
            <person name="Baliga N.S."/>
            <person name="Bonneau R."/>
            <person name="Facciotti M.T."/>
            <person name="Pan M."/>
            <person name="Glusman G."/>
            <person name="Deutsch E.W."/>
            <person name="Shannon P."/>
            <person name="Chiu Y."/>
            <person name="Weng R.S."/>
            <person name="Gan R.R."/>
            <person name="Hung P."/>
            <person name="Date S.V."/>
            <person name="Marcotte E."/>
            <person name="Hood L."/>
            <person name="Ng W.V."/>
        </authorList>
    </citation>
    <scope>NUCLEOTIDE SEQUENCE [LARGE SCALE GENOMIC DNA]</scope>
    <source>
        <strain>ATCC 43049 / DSM 3752 / JCM 8966 / VKM B-1809</strain>
    </source>
</reference>
<proteinExistence type="inferred from homology"/>
<accession>Q5V3G6</accession>
<keyword id="KW-0963">Cytoplasm</keyword>
<keyword id="KW-0255">Endonuclease</keyword>
<keyword id="KW-0378">Hydrolase</keyword>
<keyword id="KW-0479">Metal-binding</keyword>
<keyword id="KW-0540">Nuclease</keyword>
<keyword id="KW-1185">Reference proteome</keyword>